<keyword id="KW-0067">ATP-binding</keyword>
<keyword id="KW-0436">Ligase</keyword>
<keyword id="KW-0460">Magnesium</keyword>
<keyword id="KW-0479">Metal-binding</keyword>
<keyword id="KW-0547">Nucleotide-binding</keyword>
<keyword id="KW-1185">Reference proteome</keyword>
<keyword id="KW-0816">Tricarboxylic acid cycle</keyword>
<proteinExistence type="inferred from homology"/>
<organism>
    <name type="scientific">Renibacterium salmoninarum (strain ATCC 33209 / DSM 20767 / JCM 11484 / NBRC 15589 / NCIMB 2235)</name>
    <dbReference type="NCBI Taxonomy" id="288705"/>
    <lineage>
        <taxon>Bacteria</taxon>
        <taxon>Bacillati</taxon>
        <taxon>Actinomycetota</taxon>
        <taxon>Actinomycetes</taxon>
        <taxon>Micrococcales</taxon>
        <taxon>Micrococcaceae</taxon>
        <taxon>Renibacterium</taxon>
    </lineage>
</organism>
<dbReference type="EC" id="6.2.1.5" evidence="1"/>
<dbReference type="EMBL" id="CP000910">
    <property type="protein sequence ID" value="ABY22107.1"/>
    <property type="molecule type" value="Genomic_DNA"/>
</dbReference>
<dbReference type="RefSeq" id="WP_012243815.1">
    <property type="nucleotide sequence ID" value="NC_010168.1"/>
</dbReference>
<dbReference type="SMR" id="A9WKU9"/>
<dbReference type="STRING" id="288705.RSal33209_0352"/>
<dbReference type="KEGG" id="rsa:RSal33209_0352"/>
<dbReference type="eggNOG" id="COG0045">
    <property type="taxonomic scope" value="Bacteria"/>
</dbReference>
<dbReference type="HOGENOM" id="CLU_037430_0_2_11"/>
<dbReference type="UniPathway" id="UPA00223">
    <property type="reaction ID" value="UER00999"/>
</dbReference>
<dbReference type="Proteomes" id="UP000002007">
    <property type="component" value="Chromosome"/>
</dbReference>
<dbReference type="GO" id="GO:0005829">
    <property type="term" value="C:cytosol"/>
    <property type="evidence" value="ECO:0007669"/>
    <property type="project" value="TreeGrafter"/>
</dbReference>
<dbReference type="GO" id="GO:0042709">
    <property type="term" value="C:succinate-CoA ligase complex"/>
    <property type="evidence" value="ECO:0007669"/>
    <property type="project" value="TreeGrafter"/>
</dbReference>
<dbReference type="GO" id="GO:0005524">
    <property type="term" value="F:ATP binding"/>
    <property type="evidence" value="ECO:0007669"/>
    <property type="project" value="UniProtKB-UniRule"/>
</dbReference>
<dbReference type="GO" id="GO:0000287">
    <property type="term" value="F:magnesium ion binding"/>
    <property type="evidence" value="ECO:0007669"/>
    <property type="project" value="UniProtKB-UniRule"/>
</dbReference>
<dbReference type="GO" id="GO:0004775">
    <property type="term" value="F:succinate-CoA ligase (ADP-forming) activity"/>
    <property type="evidence" value="ECO:0007669"/>
    <property type="project" value="UniProtKB-UniRule"/>
</dbReference>
<dbReference type="GO" id="GO:0004776">
    <property type="term" value="F:succinate-CoA ligase (GDP-forming) activity"/>
    <property type="evidence" value="ECO:0007669"/>
    <property type="project" value="RHEA"/>
</dbReference>
<dbReference type="GO" id="GO:0006104">
    <property type="term" value="P:succinyl-CoA metabolic process"/>
    <property type="evidence" value="ECO:0007669"/>
    <property type="project" value="TreeGrafter"/>
</dbReference>
<dbReference type="GO" id="GO:0006099">
    <property type="term" value="P:tricarboxylic acid cycle"/>
    <property type="evidence" value="ECO:0007669"/>
    <property type="project" value="UniProtKB-UniRule"/>
</dbReference>
<dbReference type="FunFam" id="3.30.1490.20:FF:000014">
    <property type="entry name" value="Succinate--CoA ligase [ADP-forming] subunit beta"/>
    <property type="match status" value="1"/>
</dbReference>
<dbReference type="FunFam" id="3.30.470.20:FF:000002">
    <property type="entry name" value="Succinate--CoA ligase [ADP-forming] subunit beta"/>
    <property type="match status" value="1"/>
</dbReference>
<dbReference type="FunFam" id="3.40.50.261:FF:000007">
    <property type="entry name" value="Succinate--CoA ligase [ADP-forming] subunit beta"/>
    <property type="match status" value="1"/>
</dbReference>
<dbReference type="Gene3D" id="3.30.1490.20">
    <property type="entry name" value="ATP-grasp fold, A domain"/>
    <property type="match status" value="1"/>
</dbReference>
<dbReference type="Gene3D" id="3.30.470.20">
    <property type="entry name" value="ATP-grasp fold, B domain"/>
    <property type="match status" value="1"/>
</dbReference>
<dbReference type="Gene3D" id="3.40.50.261">
    <property type="entry name" value="Succinyl-CoA synthetase domains"/>
    <property type="match status" value="1"/>
</dbReference>
<dbReference type="HAMAP" id="MF_00558">
    <property type="entry name" value="Succ_CoA_beta"/>
    <property type="match status" value="1"/>
</dbReference>
<dbReference type="InterPro" id="IPR011761">
    <property type="entry name" value="ATP-grasp"/>
</dbReference>
<dbReference type="InterPro" id="IPR013650">
    <property type="entry name" value="ATP-grasp_succ-CoA_synth-type"/>
</dbReference>
<dbReference type="InterPro" id="IPR013815">
    <property type="entry name" value="ATP_grasp_subdomain_1"/>
</dbReference>
<dbReference type="InterPro" id="IPR017866">
    <property type="entry name" value="Succ-CoA_synthase_bsu_CS"/>
</dbReference>
<dbReference type="InterPro" id="IPR005811">
    <property type="entry name" value="SUCC_ACL_C"/>
</dbReference>
<dbReference type="InterPro" id="IPR005809">
    <property type="entry name" value="Succ_CoA_ligase-like_bsu"/>
</dbReference>
<dbReference type="InterPro" id="IPR016102">
    <property type="entry name" value="Succinyl-CoA_synth-like"/>
</dbReference>
<dbReference type="NCBIfam" id="NF001913">
    <property type="entry name" value="PRK00696.1"/>
    <property type="match status" value="1"/>
</dbReference>
<dbReference type="NCBIfam" id="TIGR01016">
    <property type="entry name" value="sucCoAbeta"/>
    <property type="match status" value="1"/>
</dbReference>
<dbReference type="PANTHER" id="PTHR11815:SF10">
    <property type="entry name" value="SUCCINATE--COA LIGASE [GDP-FORMING] SUBUNIT BETA, MITOCHONDRIAL"/>
    <property type="match status" value="1"/>
</dbReference>
<dbReference type="PANTHER" id="PTHR11815">
    <property type="entry name" value="SUCCINYL-COA SYNTHETASE BETA CHAIN"/>
    <property type="match status" value="1"/>
</dbReference>
<dbReference type="Pfam" id="PF08442">
    <property type="entry name" value="ATP-grasp_2"/>
    <property type="match status" value="1"/>
</dbReference>
<dbReference type="Pfam" id="PF00549">
    <property type="entry name" value="Ligase_CoA"/>
    <property type="match status" value="1"/>
</dbReference>
<dbReference type="PIRSF" id="PIRSF001554">
    <property type="entry name" value="SucCS_beta"/>
    <property type="match status" value="1"/>
</dbReference>
<dbReference type="SUPFAM" id="SSF56059">
    <property type="entry name" value="Glutathione synthetase ATP-binding domain-like"/>
    <property type="match status" value="1"/>
</dbReference>
<dbReference type="SUPFAM" id="SSF52210">
    <property type="entry name" value="Succinyl-CoA synthetase domains"/>
    <property type="match status" value="1"/>
</dbReference>
<dbReference type="PROSITE" id="PS50975">
    <property type="entry name" value="ATP_GRASP"/>
    <property type="match status" value="1"/>
</dbReference>
<dbReference type="PROSITE" id="PS01217">
    <property type="entry name" value="SUCCINYL_COA_LIG_3"/>
    <property type="match status" value="1"/>
</dbReference>
<protein>
    <recommendedName>
        <fullName evidence="1">Succinate--CoA ligase [ADP-forming] subunit beta</fullName>
        <ecNumber evidence="1">6.2.1.5</ecNumber>
    </recommendedName>
    <alternativeName>
        <fullName evidence="1">Succinyl-CoA synthetase subunit beta</fullName>
        <shortName evidence="1">SCS-beta</shortName>
    </alternativeName>
</protein>
<sequence length="389" mass="40707">MDLFEYQARDMFEAHGVPVLAGIVANTAEEAKAAAEKIGGVTVVKAQVKVGGRGKAGGVKVAKTADEAFEYAGNILGMDIKGHTVHKVMIAQGADIAEEYYFSVLLDRANRNYLAMCSVEGGVEIEVLAVERPEALARIAVDPAVGIDQAKAEEIVDAAGFAADVLDGVIETIKKLWDVFQKEDATLVEVNPLVKTGDGRILALDGKVTLDANADFRHPDHEALEDKDSADPLEAKAKENDLNYVKLDGEVGIIGNGAGLVMSTLDVVAYAGESHGNVKPANFLDIGGGASAEVMAAGLDVILNDAQVKSVFVNVFGGITACDAVANGIVKALEILGTSANKPLVVRLDGNNVEEGRRILTEANHPLVTQAATMDEGADKAAELAHAAK</sequence>
<gene>
    <name evidence="1" type="primary">sucC</name>
    <name type="ordered locus">RSal33209_0352</name>
</gene>
<comment type="function">
    <text evidence="1">Succinyl-CoA synthetase functions in the citric acid cycle (TCA), coupling the hydrolysis of succinyl-CoA to the synthesis of either ATP or GTP and thus represents the only step of substrate-level phosphorylation in the TCA. The beta subunit provides nucleotide specificity of the enzyme and binds the substrate succinate, while the binding sites for coenzyme A and phosphate are found in the alpha subunit.</text>
</comment>
<comment type="catalytic activity">
    <reaction evidence="1">
        <text>succinate + ATP + CoA = succinyl-CoA + ADP + phosphate</text>
        <dbReference type="Rhea" id="RHEA:17661"/>
        <dbReference type="ChEBI" id="CHEBI:30031"/>
        <dbReference type="ChEBI" id="CHEBI:30616"/>
        <dbReference type="ChEBI" id="CHEBI:43474"/>
        <dbReference type="ChEBI" id="CHEBI:57287"/>
        <dbReference type="ChEBI" id="CHEBI:57292"/>
        <dbReference type="ChEBI" id="CHEBI:456216"/>
        <dbReference type="EC" id="6.2.1.5"/>
    </reaction>
    <physiologicalReaction direction="right-to-left" evidence="1">
        <dbReference type="Rhea" id="RHEA:17663"/>
    </physiologicalReaction>
</comment>
<comment type="catalytic activity">
    <reaction evidence="1">
        <text>GTP + succinate + CoA = succinyl-CoA + GDP + phosphate</text>
        <dbReference type="Rhea" id="RHEA:22120"/>
        <dbReference type="ChEBI" id="CHEBI:30031"/>
        <dbReference type="ChEBI" id="CHEBI:37565"/>
        <dbReference type="ChEBI" id="CHEBI:43474"/>
        <dbReference type="ChEBI" id="CHEBI:57287"/>
        <dbReference type="ChEBI" id="CHEBI:57292"/>
        <dbReference type="ChEBI" id="CHEBI:58189"/>
    </reaction>
    <physiologicalReaction direction="right-to-left" evidence="1">
        <dbReference type="Rhea" id="RHEA:22122"/>
    </physiologicalReaction>
</comment>
<comment type="cofactor">
    <cofactor evidence="1">
        <name>Mg(2+)</name>
        <dbReference type="ChEBI" id="CHEBI:18420"/>
    </cofactor>
    <text evidence="1">Binds 1 Mg(2+) ion per subunit.</text>
</comment>
<comment type="pathway">
    <text evidence="1">Carbohydrate metabolism; tricarboxylic acid cycle; succinate from succinyl-CoA (ligase route): step 1/1.</text>
</comment>
<comment type="subunit">
    <text evidence="1">Heterotetramer of two alpha and two beta subunits.</text>
</comment>
<comment type="similarity">
    <text evidence="1">Belongs to the succinate/malate CoA ligase beta subunit family.</text>
</comment>
<name>SUCC_RENSM</name>
<feature type="chain" id="PRO_1000082185" description="Succinate--CoA ligase [ADP-forming] subunit beta">
    <location>
        <begin position="1"/>
        <end position="389"/>
    </location>
</feature>
<feature type="domain" description="ATP-grasp" evidence="1">
    <location>
        <begin position="9"/>
        <end position="236"/>
    </location>
</feature>
<feature type="binding site" evidence="1">
    <location>
        <position position="45"/>
    </location>
    <ligand>
        <name>ATP</name>
        <dbReference type="ChEBI" id="CHEBI:30616"/>
    </ligand>
</feature>
<feature type="binding site" evidence="1">
    <location>
        <begin position="52"/>
        <end position="54"/>
    </location>
    <ligand>
        <name>ATP</name>
        <dbReference type="ChEBI" id="CHEBI:30616"/>
    </ligand>
</feature>
<feature type="binding site" evidence="1">
    <location>
        <position position="94"/>
    </location>
    <ligand>
        <name>ATP</name>
        <dbReference type="ChEBI" id="CHEBI:30616"/>
    </ligand>
</feature>
<feature type="binding site" evidence="1">
    <location>
        <position position="99"/>
    </location>
    <ligand>
        <name>ATP</name>
        <dbReference type="ChEBI" id="CHEBI:30616"/>
    </ligand>
</feature>
<feature type="binding site" evidence="1">
    <location>
        <position position="191"/>
    </location>
    <ligand>
        <name>Mg(2+)</name>
        <dbReference type="ChEBI" id="CHEBI:18420"/>
    </ligand>
</feature>
<feature type="binding site" evidence="1">
    <location>
        <position position="205"/>
    </location>
    <ligand>
        <name>Mg(2+)</name>
        <dbReference type="ChEBI" id="CHEBI:18420"/>
    </ligand>
</feature>
<feature type="binding site" evidence="1">
    <location>
        <position position="256"/>
    </location>
    <ligand>
        <name>substrate</name>
        <note>ligand shared with subunit alpha</note>
    </ligand>
</feature>
<feature type="binding site" evidence="1">
    <location>
        <begin position="318"/>
        <end position="320"/>
    </location>
    <ligand>
        <name>substrate</name>
        <note>ligand shared with subunit alpha</note>
    </ligand>
</feature>
<reference key="1">
    <citation type="journal article" date="2008" name="J. Bacteriol.">
        <title>Genome sequence of the fish pathogen Renibacterium salmoninarum suggests reductive evolution away from an environmental Arthrobacter ancestor.</title>
        <authorList>
            <person name="Wiens G.D."/>
            <person name="Rockey D.D."/>
            <person name="Wu Z."/>
            <person name="Chang J."/>
            <person name="Levy R."/>
            <person name="Crane S."/>
            <person name="Chen D.S."/>
            <person name="Capri G.R."/>
            <person name="Burnett J.R."/>
            <person name="Sudheesh P.S."/>
            <person name="Schipma M.J."/>
            <person name="Burd H."/>
            <person name="Bhattacharyya A."/>
            <person name="Rhodes L.D."/>
            <person name="Kaul R."/>
            <person name="Strom M.S."/>
        </authorList>
    </citation>
    <scope>NUCLEOTIDE SEQUENCE [LARGE SCALE GENOMIC DNA]</scope>
    <source>
        <strain>ATCC 33209 / DSM 20767 / JCM 11484 / NBRC 15589 / NCIMB 2235</strain>
    </source>
</reference>
<evidence type="ECO:0000255" key="1">
    <source>
        <dbReference type="HAMAP-Rule" id="MF_00558"/>
    </source>
</evidence>
<accession>A9WKU9</accession>